<accession>A8F8V8</accession>
<sequence>MIILVAVVTAVISFGLGYVVAKSRIEQKNRKAQQDAVSLLKKAEQEAQEIKRKAIIEAREEVHKIKEEIEEEKKRRDLEHRSLEERLLKREEIISKREELVDKKETALEQLRVQLEAAKKKIEQREKELDERFTKLAGMTVEEARQIVIDEARQKYEHDLAILYKKIKENYEEEAEKEAKKIIATAVQRYAPEYIGEITVSTVSLPSDDMKGRIIGREGRNIRTFEKITGVDLIIDDTPEVVVLSSFNPIRREIARLTLEKLVTDGRIHPARIEEMYEKSKQEMEKMIKEAGQEATFVTGVTGLHPELIKLLGKLKFRTSYGQNVLDHSIEVAQLAALMAEELGLDVDRTRRGGLLHDIGKALDHEVEGSHTEIGAEIARRYGESDHIINMIMSHHGEQEPVCPESVLVAAADALSAARPGARRESLETYIRRLVKMEKIAMSFKNVEKAYAIQAGREVRVIVEPEKIDDVEADKMAYEIAKKIEEEVEYPGVLKVVVIREKRSIAYAK</sequence>
<evidence type="ECO:0000255" key="1">
    <source>
        <dbReference type="HAMAP-Rule" id="MF_00335"/>
    </source>
</evidence>
<evidence type="ECO:0000255" key="2">
    <source>
        <dbReference type="PROSITE-ProRule" id="PRU01175"/>
    </source>
</evidence>
<keyword id="KW-1003">Cell membrane</keyword>
<keyword id="KW-0255">Endonuclease</keyword>
<keyword id="KW-0378">Hydrolase</keyword>
<keyword id="KW-0472">Membrane</keyword>
<keyword id="KW-0540">Nuclease</keyword>
<keyword id="KW-1185">Reference proteome</keyword>
<keyword id="KW-0694">RNA-binding</keyword>
<keyword id="KW-0812">Transmembrane</keyword>
<keyword id="KW-1133">Transmembrane helix</keyword>
<organism>
    <name type="scientific">Pseudothermotoga lettingae (strain ATCC BAA-301 / DSM 14385 / NBRC 107922 / TMO)</name>
    <name type="common">Thermotoga lettingae</name>
    <dbReference type="NCBI Taxonomy" id="416591"/>
    <lineage>
        <taxon>Bacteria</taxon>
        <taxon>Thermotogati</taxon>
        <taxon>Thermotogota</taxon>
        <taxon>Thermotogae</taxon>
        <taxon>Thermotogales</taxon>
        <taxon>Thermotogaceae</taxon>
        <taxon>Pseudothermotoga</taxon>
    </lineage>
</organism>
<reference key="1">
    <citation type="submission" date="2007-08" db="EMBL/GenBank/DDBJ databases">
        <title>Complete sequence of Thermotoga lettingae TMO.</title>
        <authorList>
            <consortium name="US DOE Joint Genome Institute"/>
            <person name="Copeland A."/>
            <person name="Lucas S."/>
            <person name="Lapidus A."/>
            <person name="Barry K."/>
            <person name="Glavina del Rio T."/>
            <person name="Dalin E."/>
            <person name="Tice H."/>
            <person name="Pitluck S."/>
            <person name="Foster B."/>
            <person name="Bruce D."/>
            <person name="Schmutz J."/>
            <person name="Larimer F."/>
            <person name="Land M."/>
            <person name="Hauser L."/>
            <person name="Kyrpides N."/>
            <person name="Mikhailova N."/>
            <person name="Nelson K."/>
            <person name="Gogarten J.P."/>
            <person name="Noll K."/>
            <person name="Richardson P."/>
        </authorList>
    </citation>
    <scope>NUCLEOTIDE SEQUENCE [LARGE SCALE GENOMIC DNA]</scope>
    <source>
        <strain>ATCC BAA-301 / DSM 14385 / NBRC 107922 / TMO</strain>
    </source>
</reference>
<feature type="chain" id="PRO_0000344965" description="Ribonuclease Y">
    <location>
        <begin position="1"/>
        <end position="509"/>
    </location>
</feature>
<feature type="transmembrane region" description="Helical" evidence="1">
    <location>
        <begin position="1"/>
        <end position="21"/>
    </location>
</feature>
<feature type="domain" description="KH" evidence="1">
    <location>
        <begin position="199"/>
        <end position="259"/>
    </location>
</feature>
<feature type="domain" description="HD" evidence="2">
    <location>
        <begin position="325"/>
        <end position="418"/>
    </location>
</feature>
<name>RNY_PSELT</name>
<proteinExistence type="inferred from homology"/>
<gene>
    <name evidence="1" type="primary">rny</name>
    <name type="ordered locus">Tlet_2038</name>
</gene>
<protein>
    <recommendedName>
        <fullName evidence="1">Ribonuclease Y</fullName>
        <shortName evidence="1">RNase Y</shortName>
        <ecNumber evidence="1">3.1.-.-</ecNumber>
    </recommendedName>
</protein>
<dbReference type="EC" id="3.1.-.-" evidence="1"/>
<dbReference type="EMBL" id="CP000812">
    <property type="protein sequence ID" value="ABV34592.1"/>
    <property type="molecule type" value="Genomic_DNA"/>
</dbReference>
<dbReference type="RefSeq" id="WP_012004068.1">
    <property type="nucleotide sequence ID" value="NZ_BSDV01000001.1"/>
</dbReference>
<dbReference type="STRING" id="416591.Tlet_2038"/>
<dbReference type="KEGG" id="tle:Tlet_2038"/>
<dbReference type="eggNOG" id="COG1418">
    <property type="taxonomic scope" value="Bacteria"/>
</dbReference>
<dbReference type="HOGENOM" id="CLU_028328_1_0_0"/>
<dbReference type="OrthoDB" id="9803205at2"/>
<dbReference type="Proteomes" id="UP000002016">
    <property type="component" value="Chromosome"/>
</dbReference>
<dbReference type="GO" id="GO:0005886">
    <property type="term" value="C:plasma membrane"/>
    <property type="evidence" value="ECO:0007669"/>
    <property type="project" value="UniProtKB-SubCell"/>
</dbReference>
<dbReference type="GO" id="GO:0003723">
    <property type="term" value="F:RNA binding"/>
    <property type="evidence" value="ECO:0007669"/>
    <property type="project" value="UniProtKB-UniRule"/>
</dbReference>
<dbReference type="GO" id="GO:0004521">
    <property type="term" value="F:RNA endonuclease activity"/>
    <property type="evidence" value="ECO:0007669"/>
    <property type="project" value="UniProtKB-UniRule"/>
</dbReference>
<dbReference type="GO" id="GO:0006402">
    <property type="term" value="P:mRNA catabolic process"/>
    <property type="evidence" value="ECO:0007669"/>
    <property type="project" value="UniProtKB-UniRule"/>
</dbReference>
<dbReference type="CDD" id="cd00077">
    <property type="entry name" value="HDc"/>
    <property type="match status" value="1"/>
</dbReference>
<dbReference type="CDD" id="cd22431">
    <property type="entry name" value="KH-I_RNaseY"/>
    <property type="match status" value="1"/>
</dbReference>
<dbReference type="FunFam" id="1.10.3210.10:FF:000022">
    <property type="entry name" value="Ribonuclease Y"/>
    <property type="match status" value="1"/>
</dbReference>
<dbReference type="Gene3D" id="1.10.3210.10">
    <property type="entry name" value="Hypothetical protein af1432"/>
    <property type="match status" value="1"/>
</dbReference>
<dbReference type="Gene3D" id="3.30.1370.10">
    <property type="entry name" value="K Homology domain, type 1"/>
    <property type="match status" value="1"/>
</dbReference>
<dbReference type="HAMAP" id="MF_00335">
    <property type="entry name" value="RNase_Y"/>
    <property type="match status" value="1"/>
</dbReference>
<dbReference type="InterPro" id="IPR003607">
    <property type="entry name" value="HD/PDEase_dom"/>
</dbReference>
<dbReference type="InterPro" id="IPR006674">
    <property type="entry name" value="HD_domain"/>
</dbReference>
<dbReference type="InterPro" id="IPR006675">
    <property type="entry name" value="HDIG_dom"/>
</dbReference>
<dbReference type="InterPro" id="IPR004087">
    <property type="entry name" value="KH_dom"/>
</dbReference>
<dbReference type="InterPro" id="IPR004088">
    <property type="entry name" value="KH_dom_type_1"/>
</dbReference>
<dbReference type="InterPro" id="IPR036612">
    <property type="entry name" value="KH_dom_type_1_sf"/>
</dbReference>
<dbReference type="InterPro" id="IPR017705">
    <property type="entry name" value="Ribonuclease_Y"/>
</dbReference>
<dbReference type="InterPro" id="IPR022711">
    <property type="entry name" value="RNase_Y_N"/>
</dbReference>
<dbReference type="NCBIfam" id="TIGR00277">
    <property type="entry name" value="HDIG"/>
    <property type="match status" value="1"/>
</dbReference>
<dbReference type="NCBIfam" id="TIGR03319">
    <property type="entry name" value="RNase_Y"/>
    <property type="match status" value="1"/>
</dbReference>
<dbReference type="PANTHER" id="PTHR12826">
    <property type="entry name" value="RIBONUCLEASE Y"/>
    <property type="match status" value="1"/>
</dbReference>
<dbReference type="PANTHER" id="PTHR12826:SF15">
    <property type="entry name" value="RIBONUCLEASE Y"/>
    <property type="match status" value="1"/>
</dbReference>
<dbReference type="Pfam" id="PF01966">
    <property type="entry name" value="HD"/>
    <property type="match status" value="1"/>
</dbReference>
<dbReference type="Pfam" id="PF00013">
    <property type="entry name" value="KH_1"/>
    <property type="match status" value="1"/>
</dbReference>
<dbReference type="Pfam" id="PF12072">
    <property type="entry name" value="RNase_Y_N"/>
    <property type="match status" value="1"/>
</dbReference>
<dbReference type="SMART" id="SM00471">
    <property type="entry name" value="HDc"/>
    <property type="match status" value="1"/>
</dbReference>
<dbReference type="SMART" id="SM00322">
    <property type="entry name" value="KH"/>
    <property type="match status" value="1"/>
</dbReference>
<dbReference type="SUPFAM" id="SSF54791">
    <property type="entry name" value="Eukaryotic type KH-domain (KH-domain type I)"/>
    <property type="match status" value="1"/>
</dbReference>
<dbReference type="SUPFAM" id="SSF109604">
    <property type="entry name" value="HD-domain/PDEase-like"/>
    <property type="match status" value="1"/>
</dbReference>
<dbReference type="PROSITE" id="PS51831">
    <property type="entry name" value="HD"/>
    <property type="match status" value="1"/>
</dbReference>
<dbReference type="PROSITE" id="PS50084">
    <property type="entry name" value="KH_TYPE_1"/>
    <property type="match status" value="1"/>
</dbReference>
<comment type="function">
    <text evidence="1">Endoribonuclease that initiates mRNA decay.</text>
</comment>
<comment type="subcellular location">
    <subcellularLocation>
        <location evidence="1">Cell membrane</location>
        <topology evidence="1">Single-pass membrane protein</topology>
    </subcellularLocation>
</comment>
<comment type="similarity">
    <text evidence="1">Belongs to the RNase Y family.</text>
</comment>